<organism>
    <name type="scientific">Mesorhizobium japonicum (strain LMG 29417 / CECT 9101 / MAFF 303099)</name>
    <name type="common">Mesorhizobium loti (strain MAFF 303099)</name>
    <dbReference type="NCBI Taxonomy" id="266835"/>
    <lineage>
        <taxon>Bacteria</taxon>
        <taxon>Pseudomonadati</taxon>
        <taxon>Pseudomonadota</taxon>
        <taxon>Alphaproteobacteria</taxon>
        <taxon>Hyphomicrobiales</taxon>
        <taxon>Phyllobacteriaceae</taxon>
        <taxon>Mesorhizobium</taxon>
    </lineage>
</organism>
<proteinExistence type="inferred from homology"/>
<comment type="function">
    <text evidence="1">One of the primary rRNA binding proteins, it binds directly to 16S rRNA where it nucleates assembly of the body of the 30S subunit.</text>
</comment>
<comment type="function">
    <text evidence="1">With S5 and S12 plays an important role in translational accuracy.</text>
</comment>
<comment type="subunit">
    <text evidence="1">Part of the 30S ribosomal subunit. Contacts protein S5. The interaction surface between S4 and S5 is involved in control of translational fidelity.</text>
</comment>
<comment type="similarity">
    <text evidence="1">Belongs to the universal ribosomal protein uS4 family.</text>
</comment>
<accession>Q98NP5</accession>
<sequence length="205" mass="23413">MSKRESAKYKIDRRLGENIWGRPKSPVNKREYGPGQHGQRRKGKLSDFGLQLRAKQKLKGHYGDVSEKQFRKVYEEADRRKGDTSENLIGLLESRLDAVVYRAKFVPTIFAARQFVNHGHVNVNGKRVNIGSYRCKPGDVIEVREKSKQLVIVLESVGLAERDVPDYIEADHNKMVATFSRIPGLADVPFAVQMEPNLVVEFYSR</sequence>
<dbReference type="EMBL" id="BA000012">
    <property type="protein sequence ID" value="BAB47716.1"/>
    <property type="molecule type" value="Genomic_DNA"/>
</dbReference>
<dbReference type="RefSeq" id="WP_010909086.1">
    <property type="nucleotide sequence ID" value="NC_002678.2"/>
</dbReference>
<dbReference type="SMR" id="Q98NP5"/>
<dbReference type="GeneID" id="66684407"/>
<dbReference type="KEGG" id="mlo:mlr0045"/>
<dbReference type="eggNOG" id="COG0522">
    <property type="taxonomic scope" value="Bacteria"/>
</dbReference>
<dbReference type="HOGENOM" id="CLU_092403_0_0_5"/>
<dbReference type="Proteomes" id="UP000000552">
    <property type="component" value="Chromosome"/>
</dbReference>
<dbReference type="GO" id="GO:0015935">
    <property type="term" value="C:small ribosomal subunit"/>
    <property type="evidence" value="ECO:0007669"/>
    <property type="project" value="InterPro"/>
</dbReference>
<dbReference type="GO" id="GO:0019843">
    <property type="term" value="F:rRNA binding"/>
    <property type="evidence" value="ECO:0007669"/>
    <property type="project" value="UniProtKB-UniRule"/>
</dbReference>
<dbReference type="GO" id="GO:0003735">
    <property type="term" value="F:structural constituent of ribosome"/>
    <property type="evidence" value="ECO:0007669"/>
    <property type="project" value="InterPro"/>
</dbReference>
<dbReference type="GO" id="GO:0042274">
    <property type="term" value="P:ribosomal small subunit biogenesis"/>
    <property type="evidence" value="ECO:0007669"/>
    <property type="project" value="TreeGrafter"/>
</dbReference>
<dbReference type="GO" id="GO:0006412">
    <property type="term" value="P:translation"/>
    <property type="evidence" value="ECO:0007669"/>
    <property type="project" value="UniProtKB-UniRule"/>
</dbReference>
<dbReference type="CDD" id="cd00165">
    <property type="entry name" value="S4"/>
    <property type="match status" value="1"/>
</dbReference>
<dbReference type="FunFam" id="3.10.290.10:FF:000001">
    <property type="entry name" value="30S ribosomal protein S4"/>
    <property type="match status" value="1"/>
</dbReference>
<dbReference type="Gene3D" id="1.10.1050.10">
    <property type="entry name" value="Ribosomal Protein S4 Delta 41, Chain A, domain 1"/>
    <property type="match status" value="1"/>
</dbReference>
<dbReference type="Gene3D" id="3.10.290.10">
    <property type="entry name" value="RNA-binding S4 domain"/>
    <property type="match status" value="1"/>
</dbReference>
<dbReference type="HAMAP" id="MF_01306_B">
    <property type="entry name" value="Ribosomal_uS4_B"/>
    <property type="match status" value="1"/>
</dbReference>
<dbReference type="InterPro" id="IPR022801">
    <property type="entry name" value="Ribosomal_uS4"/>
</dbReference>
<dbReference type="InterPro" id="IPR005709">
    <property type="entry name" value="Ribosomal_uS4_bac-type"/>
</dbReference>
<dbReference type="InterPro" id="IPR018079">
    <property type="entry name" value="Ribosomal_uS4_CS"/>
</dbReference>
<dbReference type="InterPro" id="IPR001912">
    <property type="entry name" value="Ribosomal_uS4_N"/>
</dbReference>
<dbReference type="InterPro" id="IPR002942">
    <property type="entry name" value="S4_RNA-bd"/>
</dbReference>
<dbReference type="InterPro" id="IPR036986">
    <property type="entry name" value="S4_RNA-bd_sf"/>
</dbReference>
<dbReference type="NCBIfam" id="NF003717">
    <property type="entry name" value="PRK05327.1"/>
    <property type="match status" value="1"/>
</dbReference>
<dbReference type="NCBIfam" id="TIGR01017">
    <property type="entry name" value="rpsD_bact"/>
    <property type="match status" value="1"/>
</dbReference>
<dbReference type="PANTHER" id="PTHR11831">
    <property type="entry name" value="30S 40S RIBOSOMAL PROTEIN"/>
    <property type="match status" value="1"/>
</dbReference>
<dbReference type="PANTHER" id="PTHR11831:SF4">
    <property type="entry name" value="SMALL RIBOSOMAL SUBUNIT PROTEIN US4M"/>
    <property type="match status" value="1"/>
</dbReference>
<dbReference type="Pfam" id="PF00163">
    <property type="entry name" value="Ribosomal_S4"/>
    <property type="match status" value="1"/>
</dbReference>
<dbReference type="Pfam" id="PF01479">
    <property type="entry name" value="S4"/>
    <property type="match status" value="1"/>
</dbReference>
<dbReference type="SMART" id="SM01390">
    <property type="entry name" value="Ribosomal_S4"/>
    <property type="match status" value="1"/>
</dbReference>
<dbReference type="SMART" id="SM00363">
    <property type="entry name" value="S4"/>
    <property type="match status" value="1"/>
</dbReference>
<dbReference type="SUPFAM" id="SSF55174">
    <property type="entry name" value="Alpha-L RNA-binding motif"/>
    <property type="match status" value="1"/>
</dbReference>
<dbReference type="PROSITE" id="PS00632">
    <property type="entry name" value="RIBOSOMAL_S4"/>
    <property type="match status" value="1"/>
</dbReference>
<dbReference type="PROSITE" id="PS50889">
    <property type="entry name" value="S4"/>
    <property type="match status" value="1"/>
</dbReference>
<keyword id="KW-0687">Ribonucleoprotein</keyword>
<keyword id="KW-0689">Ribosomal protein</keyword>
<keyword id="KW-0694">RNA-binding</keyword>
<keyword id="KW-0699">rRNA-binding</keyword>
<feature type="chain" id="PRO_0000132442" description="Small ribosomal subunit protein uS4">
    <location>
        <begin position="1"/>
        <end position="205"/>
    </location>
</feature>
<feature type="domain" description="S4 RNA-binding" evidence="1">
    <location>
        <begin position="94"/>
        <end position="157"/>
    </location>
</feature>
<feature type="region of interest" description="Disordered" evidence="2">
    <location>
        <begin position="17"/>
        <end position="46"/>
    </location>
</feature>
<reference key="1">
    <citation type="journal article" date="2000" name="DNA Res.">
        <title>Complete genome structure of the nitrogen-fixing symbiotic bacterium Mesorhizobium loti.</title>
        <authorList>
            <person name="Kaneko T."/>
            <person name="Nakamura Y."/>
            <person name="Sato S."/>
            <person name="Asamizu E."/>
            <person name="Kato T."/>
            <person name="Sasamoto S."/>
            <person name="Watanabe A."/>
            <person name="Idesawa K."/>
            <person name="Ishikawa A."/>
            <person name="Kawashima K."/>
            <person name="Kimura T."/>
            <person name="Kishida Y."/>
            <person name="Kiyokawa C."/>
            <person name="Kohara M."/>
            <person name="Matsumoto M."/>
            <person name="Matsuno A."/>
            <person name="Mochizuki Y."/>
            <person name="Nakayama S."/>
            <person name="Nakazaki N."/>
            <person name="Shimpo S."/>
            <person name="Sugimoto M."/>
            <person name="Takeuchi C."/>
            <person name="Yamada M."/>
            <person name="Tabata S."/>
        </authorList>
    </citation>
    <scope>NUCLEOTIDE SEQUENCE [LARGE SCALE GENOMIC DNA]</scope>
    <source>
        <strain>LMG 29417 / CECT 9101 / MAFF 303099</strain>
    </source>
</reference>
<gene>
    <name evidence="1" type="primary">rpsD</name>
    <name type="ordered locus">mlr0045</name>
</gene>
<name>RS4_RHILO</name>
<protein>
    <recommendedName>
        <fullName evidence="1">Small ribosomal subunit protein uS4</fullName>
    </recommendedName>
    <alternativeName>
        <fullName evidence="3">30S ribosomal protein S4</fullName>
    </alternativeName>
</protein>
<evidence type="ECO:0000255" key="1">
    <source>
        <dbReference type="HAMAP-Rule" id="MF_01306"/>
    </source>
</evidence>
<evidence type="ECO:0000256" key="2">
    <source>
        <dbReference type="SAM" id="MobiDB-lite"/>
    </source>
</evidence>
<evidence type="ECO:0000305" key="3"/>